<gene>
    <name evidence="1" type="primary">trmFO</name>
    <name type="synonym">gid</name>
    <name type="ordered locus">Atu1669</name>
    <name type="ORF">AGR_C_3069</name>
</gene>
<feature type="chain" id="PRO_0000117225" description="Methylenetetrahydrofolate--tRNA-(uracil-5-)-methyltransferase TrmFO">
    <location>
        <begin position="1"/>
        <end position="481"/>
    </location>
</feature>
<feature type="binding site" evidence="1">
    <location>
        <begin position="13"/>
        <end position="18"/>
    </location>
    <ligand>
        <name>FAD</name>
        <dbReference type="ChEBI" id="CHEBI:57692"/>
    </ligand>
</feature>
<name>TRMFO_AGRFC</name>
<sequence>MQDKTHSPIHVVGGGLAGSEAAWQIAESGVPVILHEMRGVRGTDAHKGDTLAELVCSNSFRSDDATANAVGVIHAEMRLAGSLIIACADKHQVPAGGALAVDRDGFSQAVTDMLENHPLVTVVREEVTGLPPKEWGSTVIATGPLTSPDLAAAVQAETGEDALAFFDAIAPILHRDSINMDICWYQSRYDKVGPGGTGKDYINCPMDEEQYNVFIDALIAGDTVGFKEWEGTPYFDGCLPIEIMAERGRQTLRHGPMKPMGLTNAHNPTVKAYAVVQLRQDNALGTLYNMVGFQTKLKYSVQADVFRMIPGLENAEFARLGGLHRNTYIDSPILLDRSLRLKSRPDLRFAGQITGCEGYVESASVGLLAGRFAAAERKGEAPSLPPATTALGSLLNHITGGHLSSDDEPGKRSFQPMNINFGLFPELEPGSIVKPDGVKRFRGKDKTIMKRQLVAARALKDCAAWLGVERVATEQESDATP</sequence>
<proteinExistence type="inferred from homology"/>
<organism>
    <name type="scientific">Agrobacterium fabrum (strain C58 / ATCC 33970)</name>
    <name type="common">Agrobacterium tumefaciens (strain C58)</name>
    <dbReference type="NCBI Taxonomy" id="176299"/>
    <lineage>
        <taxon>Bacteria</taxon>
        <taxon>Pseudomonadati</taxon>
        <taxon>Pseudomonadota</taxon>
        <taxon>Alphaproteobacteria</taxon>
        <taxon>Hyphomicrobiales</taxon>
        <taxon>Rhizobiaceae</taxon>
        <taxon>Rhizobium/Agrobacterium group</taxon>
        <taxon>Agrobacterium</taxon>
        <taxon>Agrobacterium tumefaciens complex</taxon>
    </lineage>
</organism>
<protein>
    <recommendedName>
        <fullName evidence="1">Methylenetetrahydrofolate--tRNA-(uracil-5-)-methyltransferase TrmFO</fullName>
        <ecNumber evidence="1">2.1.1.74</ecNumber>
    </recommendedName>
    <alternativeName>
        <fullName evidence="1">Folate-dependent tRNA (uracil-5-)-methyltransferase</fullName>
    </alternativeName>
    <alternativeName>
        <fullName evidence="1">Folate-dependent tRNA(M-5-U54)-methyltransferase</fullName>
    </alternativeName>
</protein>
<comment type="function">
    <text evidence="1">Catalyzes the folate-dependent formation of 5-methyl-uridine at position 54 (M-5-U54) in all tRNAs.</text>
</comment>
<comment type="catalytic activity">
    <reaction evidence="1">
        <text>uridine(54) in tRNA + (6R)-5,10-methylene-5,6,7,8-tetrahydrofolate + NADH + H(+) = 5-methyluridine(54) in tRNA + (6S)-5,6,7,8-tetrahydrofolate + NAD(+)</text>
        <dbReference type="Rhea" id="RHEA:16873"/>
        <dbReference type="Rhea" id="RHEA-COMP:10167"/>
        <dbReference type="Rhea" id="RHEA-COMP:10193"/>
        <dbReference type="ChEBI" id="CHEBI:15378"/>
        <dbReference type="ChEBI" id="CHEBI:15636"/>
        <dbReference type="ChEBI" id="CHEBI:57453"/>
        <dbReference type="ChEBI" id="CHEBI:57540"/>
        <dbReference type="ChEBI" id="CHEBI:57945"/>
        <dbReference type="ChEBI" id="CHEBI:65315"/>
        <dbReference type="ChEBI" id="CHEBI:74447"/>
        <dbReference type="EC" id="2.1.1.74"/>
    </reaction>
</comment>
<comment type="catalytic activity">
    <reaction evidence="1">
        <text>uridine(54) in tRNA + (6R)-5,10-methylene-5,6,7,8-tetrahydrofolate + NADPH + H(+) = 5-methyluridine(54) in tRNA + (6S)-5,6,7,8-tetrahydrofolate + NADP(+)</text>
        <dbReference type="Rhea" id="RHEA:62372"/>
        <dbReference type="Rhea" id="RHEA-COMP:10167"/>
        <dbReference type="Rhea" id="RHEA-COMP:10193"/>
        <dbReference type="ChEBI" id="CHEBI:15378"/>
        <dbReference type="ChEBI" id="CHEBI:15636"/>
        <dbReference type="ChEBI" id="CHEBI:57453"/>
        <dbReference type="ChEBI" id="CHEBI:57783"/>
        <dbReference type="ChEBI" id="CHEBI:58349"/>
        <dbReference type="ChEBI" id="CHEBI:65315"/>
        <dbReference type="ChEBI" id="CHEBI:74447"/>
        <dbReference type="EC" id="2.1.1.74"/>
    </reaction>
</comment>
<comment type="cofactor">
    <cofactor evidence="1">
        <name>FAD</name>
        <dbReference type="ChEBI" id="CHEBI:57692"/>
    </cofactor>
</comment>
<comment type="subcellular location">
    <subcellularLocation>
        <location evidence="1">Cytoplasm</location>
    </subcellularLocation>
</comment>
<comment type="similarity">
    <text evidence="1">Belongs to the MnmG family. TrmFO subfamily.</text>
</comment>
<reference key="1">
    <citation type="journal article" date="2001" name="Science">
        <title>The genome of the natural genetic engineer Agrobacterium tumefaciens C58.</title>
        <authorList>
            <person name="Wood D.W."/>
            <person name="Setubal J.C."/>
            <person name="Kaul R."/>
            <person name="Monks D.E."/>
            <person name="Kitajima J.P."/>
            <person name="Okura V.K."/>
            <person name="Zhou Y."/>
            <person name="Chen L."/>
            <person name="Wood G.E."/>
            <person name="Almeida N.F. Jr."/>
            <person name="Woo L."/>
            <person name="Chen Y."/>
            <person name="Paulsen I.T."/>
            <person name="Eisen J.A."/>
            <person name="Karp P.D."/>
            <person name="Bovee D. Sr."/>
            <person name="Chapman P."/>
            <person name="Clendenning J."/>
            <person name="Deatherage G."/>
            <person name="Gillet W."/>
            <person name="Grant C."/>
            <person name="Kutyavin T."/>
            <person name="Levy R."/>
            <person name="Li M.-J."/>
            <person name="McClelland E."/>
            <person name="Palmieri A."/>
            <person name="Raymond C."/>
            <person name="Rouse G."/>
            <person name="Saenphimmachak C."/>
            <person name="Wu Z."/>
            <person name="Romero P."/>
            <person name="Gordon D."/>
            <person name="Zhang S."/>
            <person name="Yoo H."/>
            <person name="Tao Y."/>
            <person name="Biddle P."/>
            <person name="Jung M."/>
            <person name="Krespan W."/>
            <person name="Perry M."/>
            <person name="Gordon-Kamm B."/>
            <person name="Liao L."/>
            <person name="Kim S."/>
            <person name="Hendrick C."/>
            <person name="Zhao Z.-Y."/>
            <person name="Dolan M."/>
            <person name="Chumley F."/>
            <person name="Tingey S.V."/>
            <person name="Tomb J.-F."/>
            <person name="Gordon M.P."/>
            <person name="Olson M.V."/>
            <person name="Nester E.W."/>
        </authorList>
    </citation>
    <scope>NUCLEOTIDE SEQUENCE [LARGE SCALE GENOMIC DNA]</scope>
    <source>
        <strain>C58 / ATCC 33970</strain>
    </source>
</reference>
<reference key="2">
    <citation type="journal article" date="2001" name="Science">
        <title>Genome sequence of the plant pathogen and biotechnology agent Agrobacterium tumefaciens C58.</title>
        <authorList>
            <person name="Goodner B."/>
            <person name="Hinkle G."/>
            <person name="Gattung S."/>
            <person name="Miller N."/>
            <person name="Blanchard M."/>
            <person name="Qurollo B."/>
            <person name="Goldman B.S."/>
            <person name="Cao Y."/>
            <person name="Askenazi M."/>
            <person name="Halling C."/>
            <person name="Mullin L."/>
            <person name="Houmiel K."/>
            <person name="Gordon J."/>
            <person name="Vaudin M."/>
            <person name="Iartchouk O."/>
            <person name="Epp A."/>
            <person name="Liu F."/>
            <person name="Wollam C."/>
            <person name="Allinger M."/>
            <person name="Doughty D."/>
            <person name="Scott C."/>
            <person name="Lappas C."/>
            <person name="Markelz B."/>
            <person name="Flanagan C."/>
            <person name="Crowell C."/>
            <person name="Gurson J."/>
            <person name="Lomo C."/>
            <person name="Sear C."/>
            <person name="Strub G."/>
            <person name="Cielo C."/>
            <person name="Slater S."/>
        </authorList>
    </citation>
    <scope>NUCLEOTIDE SEQUENCE [LARGE SCALE GENOMIC DNA]</scope>
    <source>
        <strain>C58 / ATCC 33970</strain>
    </source>
</reference>
<evidence type="ECO:0000255" key="1">
    <source>
        <dbReference type="HAMAP-Rule" id="MF_01037"/>
    </source>
</evidence>
<accession>Q8UET6</accession>
<keyword id="KW-0963">Cytoplasm</keyword>
<keyword id="KW-0274">FAD</keyword>
<keyword id="KW-0285">Flavoprotein</keyword>
<keyword id="KW-0489">Methyltransferase</keyword>
<keyword id="KW-0520">NAD</keyword>
<keyword id="KW-0521">NADP</keyword>
<keyword id="KW-1185">Reference proteome</keyword>
<keyword id="KW-0808">Transferase</keyword>
<keyword id="KW-0819">tRNA processing</keyword>
<dbReference type="EC" id="2.1.1.74" evidence="1"/>
<dbReference type="EMBL" id="AE007869">
    <property type="protein sequence ID" value="AAK87440.2"/>
    <property type="molecule type" value="Genomic_DNA"/>
</dbReference>
<dbReference type="PIR" id="AG2781">
    <property type="entry name" value="AG2781"/>
</dbReference>
<dbReference type="PIR" id="G97560">
    <property type="entry name" value="G97560"/>
</dbReference>
<dbReference type="RefSeq" id="NP_354655.2">
    <property type="nucleotide sequence ID" value="NC_003062.2"/>
</dbReference>
<dbReference type="SMR" id="Q8UET6"/>
<dbReference type="STRING" id="176299.Atu1669"/>
<dbReference type="EnsemblBacteria" id="AAK87440">
    <property type="protein sequence ID" value="AAK87440"/>
    <property type="gene ID" value="Atu1669"/>
</dbReference>
<dbReference type="KEGG" id="atu:Atu1669"/>
<dbReference type="PATRIC" id="fig|176299.10.peg.1686"/>
<dbReference type="eggNOG" id="COG1206">
    <property type="taxonomic scope" value="Bacteria"/>
</dbReference>
<dbReference type="HOGENOM" id="CLU_033057_1_0_5"/>
<dbReference type="OrthoDB" id="9803114at2"/>
<dbReference type="PhylomeDB" id="Q8UET6"/>
<dbReference type="BioCyc" id="AGRO:ATU1669-MONOMER"/>
<dbReference type="Proteomes" id="UP000000813">
    <property type="component" value="Chromosome circular"/>
</dbReference>
<dbReference type="GO" id="GO:0005829">
    <property type="term" value="C:cytosol"/>
    <property type="evidence" value="ECO:0007669"/>
    <property type="project" value="TreeGrafter"/>
</dbReference>
<dbReference type="GO" id="GO:0050660">
    <property type="term" value="F:flavin adenine dinucleotide binding"/>
    <property type="evidence" value="ECO:0007669"/>
    <property type="project" value="UniProtKB-UniRule"/>
</dbReference>
<dbReference type="GO" id="GO:0047151">
    <property type="term" value="F:tRNA (uracil(54)-C5)-methyltransferase activity, 5,10-methylenetetrahydrofolate-dependent"/>
    <property type="evidence" value="ECO:0007669"/>
    <property type="project" value="UniProtKB-UniRule"/>
</dbReference>
<dbReference type="GO" id="GO:0030488">
    <property type="term" value="P:tRNA methylation"/>
    <property type="evidence" value="ECO:0007669"/>
    <property type="project" value="TreeGrafter"/>
</dbReference>
<dbReference type="GO" id="GO:0002098">
    <property type="term" value="P:tRNA wobble uridine modification"/>
    <property type="evidence" value="ECO:0007669"/>
    <property type="project" value="TreeGrafter"/>
</dbReference>
<dbReference type="Gene3D" id="3.50.50.60">
    <property type="entry name" value="FAD/NAD(P)-binding domain"/>
    <property type="match status" value="2"/>
</dbReference>
<dbReference type="HAMAP" id="MF_01037">
    <property type="entry name" value="TrmFO"/>
    <property type="match status" value="1"/>
</dbReference>
<dbReference type="InterPro" id="IPR036188">
    <property type="entry name" value="FAD/NAD-bd_sf"/>
</dbReference>
<dbReference type="InterPro" id="IPR002218">
    <property type="entry name" value="MnmG-rel"/>
</dbReference>
<dbReference type="InterPro" id="IPR020595">
    <property type="entry name" value="MnmG-rel_CS"/>
</dbReference>
<dbReference type="InterPro" id="IPR040131">
    <property type="entry name" value="MnmG_N"/>
</dbReference>
<dbReference type="InterPro" id="IPR004417">
    <property type="entry name" value="TrmFO"/>
</dbReference>
<dbReference type="NCBIfam" id="TIGR00137">
    <property type="entry name" value="gid_trmFO"/>
    <property type="match status" value="1"/>
</dbReference>
<dbReference type="NCBIfam" id="NF003739">
    <property type="entry name" value="PRK05335.1"/>
    <property type="match status" value="1"/>
</dbReference>
<dbReference type="PANTHER" id="PTHR11806">
    <property type="entry name" value="GLUCOSE INHIBITED DIVISION PROTEIN A"/>
    <property type="match status" value="1"/>
</dbReference>
<dbReference type="PANTHER" id="PTHR11806:SF2">
    <property type="entry name" value="METHYLENETETRAHYDROFOLATE--TRNA-(URACIL-5-)-METHYLTRANSFERASE TRMFO"/>
    <property type="match status" value="1"/>
</dbReference>
<dbReference type="Pfam" id="PF01134">
    <property type="entry name" value="GIDA"/>
    <property type="match status" value="1"/>
</dbReference>
<dbReference type="SUPFAM" id="SSF51905">
    <property type="entry name" value="FAD/NAD(P)-binding domain"/>
    <property type="match status" value="1"/>
</dbReference>
<dbReference type="PROSITE" id="PS01281">
    <property type="entry name" value="GIDA_2"/>
    <property type="match status" value="1"/>
</dbReference>